<organism>
    <name type="scientific">Staphylococcus aureus</name>
    <dbReference type="NCBI Taxonomy" id="1280"/>
    <lineage>
        <taxon>Bacteria</taxon>
        <taxon>Bacillati</taxon>
        <taxon>Bacillota</taxon>
        <taxon>Bacilli</taxon>
        <taxon>Bacillales</taxon>
        <taxon>Staphylococcaceae</taxon>
        <taxon>Staphylococcus</taxon>
    </lineage>
</organism>
<gene>
    <name evidence="1" type="primary">grpE</name>
</gene>
<accession>P63191</accession>
<accession>P45553</accession>
<evidence type="ECO:0000255" key="1">
    <source>
        <dbReference type="HAMAP-Rule" id="MF_01151"/>
    </source>
</evidence>
<evidence type="ECO:0000256" key="2">
    <source>
        <dbReference type="SAM" id="MobiDB-lite"/>
    </source>
</evidence>
<sequence length="208" mass="24022">MTNKDESVEKNTESTVEETNIKQNIDDSVEQAEESKGHLQDEAIEETSDENVIEEIDPKDQKINELQQLADENEEKYLRLYAEFENYKRRIQKENEINKTYQAQRVLTDILPAIDNIERALQIEGDDETFKSLQKGVQMVHESLINALKDNGLEVIKTEGEAFDPNIHQAVVQDDNPDFESGEITQELQKGYKLKDRVLRPSMVKVNQ</sequence>
<protein>
    <recommendedName>
        <fullName evidence="1">Protein GrpE</fullName>
    </recommendedName>
    <alternativeName>
        <fullName evidence="1">HSP-70 cofactor</fullName>
    </alternativeName>
</protein>
<keyword id="KW-0143">Chaperone</keyword>
<keyword id="KW-0963">Cytoplasm</keyword>
<keyword id="KW-0346">Stress response</keyword>
<feature type="chain" id="PRO_0000113857" description="Protein GrpE">
    <location>
        <begin position="1"/>
        <end position="208"/>
    </location>
</feature>
<feature type="region of interest" description="Disordered" evidence="2">
    <location>
        <begin position="1"/>
        <end position="59"/>
    </location>
</feature>
<feature type="compositionally biased region" description="Basic and acidic residues" evidence="2">
    <location>
        <begin position="1"/>
        <end position="12"/>
    </location>
</feature>
<feature type="compositionally biased region" description="Polar residues" evidence="2">
    <location>
        <begin position="13"/>
        <end position="23"/>
    </location>
</feature>
<feature type="compositionally biased region" description="Acidic residues" evidence="2">
    <location>
        <begin position="42"/>
        <end position="55"/>
    </location>
</feature>
<proteinExistence type="inferred from homology"/>
<comment type="function">
    <text evidence="1">Participates actively in the response to hyperosmotic and heat shock by preventing the aggregation of stress-denatured proteins, in association with DnaK and GrpE. It is the nucleotide exchange factor for DnaK and may function as a thermosensor. Unfolded proteins bind initially to DnaJ; upon interaction with the DnaJ-bound protein, DnaK hydrolyzes its bound ATP, resulting in the formation of a stable complex. GrpE releases ADP from DnaK; ATP binding to DnaK triggers the release of the substrate protein, thus completing the reaction cycle. Several rounds of ATP-dependent interactions between DnaJ, DnaK and GrpE are required for fully efficient folding.</text>
</comment>
<comment type="subunit">
    <text evidence="1">Homodimer.</text>
</comment>
<comment type="subcellular location">
    <subcellularLocation>
        <location evidence="1">Cytoplasm</location>
    </subcellularLocation>
</comment>
<comment type="similarity">
    <text evidence="1">Belongs to the GrpE family.</text>
</comment>
<dbReference type="EMBL" id="D30690">
    <property type="protein sequence ID" value="BAA06358.1"/>
    <property type="molecule type" value="Genomic_DNA"/>
</dbReference>
<dbReference type="RefSeq" id="WP_000182211.1">
    <property type="nucleotide sequence ID" value="NZ_WYDB01000002.1"/>
</dbReference>
<dbReference type="SMR" id="P63191"/>
<dbReference type="OMA" id="PHRHQAI"/>
<dbReference type="GO" id="GO:0005737">
    <property type="term" value="C:cytoplasm"/>
    <property type="evidence" value="ECO:0007669"/>
    <property type="project" value="UniProtKB-SubCell"/>
</dbReference>
<dbReference type="GO" id="GO:0000774">
    <property type="term" value="F:adenyl-nucleotide exchange factor activity"/>
    <property type="evidence" value="ECO:0007669"/>
    <property type="project" value="InterPro"/>
</dbReference>
<dbReference type="GO" id="GO:0042803">
    <property type="term" value="F:protein homodimerization activity"/>
    <property type="evidence" value="ECO:0007669"/>
    <property type="project" value="InterPro"/>
</dbReference>
<dbReference type="GO" id="GO:0051087">
    <property type="term" value="F:protein-folding chaperone binding"/>
    <property type="evidence" value="ECO:0007669"/>
    <property type="project" value="InterPro"/>
</dbReference>
<dbReference type="GO" id="GO:0051082">
    <property type="term" value="F:unfolded protein binding"/>
    <property type="evidence" value="ECO:0007669"/>
    <property type="project" value="TreeGrafter"/>
</dbReference>
<dbReference type="GO" id="GO:0006457">
    <property type="term" value="P:protein folding"/>
    <property type="evidence" value="ECO:0007669"/>
    <property type="project" value="InterPro"/>
</dbReference>
<dbReference type="CDD" id="cd00446">
    <property type="entry name" value="GrpE"/>
    <property type="match status" value="1"/>
</dbReference>
<dbReference type="FunFam" id="2.30.22.10:FF:000001">
    <property type="entry name" value="Protein GrpE"/>
    <property type="match status" value="1"/>
</dbReference>
<dbReference type="FunFam" id="3.90.20.20:FF:000002">
    <property type="entry name" value="Protein GrpE"/>
    <property type="match status" value="1"/>
</dbReference>
<dbReference type="Gene3D" id="3.90.20.20">
    <property type="match status" value="1"/>
</dbReference>
<dbReference type="Gene3D" id="2.30.22.10">
    <property type="entry name" value="Head domain of nucleotide exchange factor GrpE"/>
    <property type="match status" value="1"/>
</dbReference>
<dbReference type="HAMAP" id="MF_01151">
    <property type="entry name" value="GrpE"/>
    <property type="match status" value="1"/>
</dbReference>
<dbReference type="InterPro" id="IPR000740">
    <property type="entry name" value="GrpE"/>
</dbReference>
<dbReference type="InterPro" id="IPR013805">
    <property type="entry name" value="GrpE_coiled_coil"/>
</dbReference>
<dbReference type="InterPro" id="IPR009012">
    <property type="entry name" value="GrpE_head"/>
</dbReference>
<dbReference type="NCBIfam" id="NF010738">
    <property type="entry name" value="PRK14140.1"/>
    <property type="match status" value="1"/>
</dbReference>
<dbReference type="PANTHER" id="PTHR21237">
    <property type="entry name" value="GRPE PROTEIN"/>
    <property type="match status" value="1"/>
</dbReference>
<dbReference type="PANTHER" id="PTHR21237:SF23">
    <property type="entry name" value="GRPE PROTEIN HOMOLOG, MITOCHONDRIAL"/>
    <property type="match status" value="1"/>
</dbReference>
<dbReference type="Pfam" id="PF01025">
    <property type="entry name" value="GrpE"/>
    <property type="match status" value="1"/>
</dbReference>
<dbReference type="PRINTS" id="PR00773">
    <property type="entry name" value="GRPEPROTEIN"/>
</dbReference>
<dbReference type="SUPFAM" id="SSF58014">
    <property type="entry name" value="Coiled-coil domain of nucleotide exchange factor GrpE"/>
    <property type="match status" value="1"/>
</dbReference>
<dbReference type="SUPFAM" id="SSF51064">
    <property type="entry name" value="Head domain of nucleotide exchange factor GrpE"/>
    <property type="match status" value="1"/>
</dbReference>
<dbReference type="PROSITE" id="PS01071">
    <property type="entry name" value="GRPE"/>
    <property type="match status" value="1"/>
</dbReference>
<name>GRPE_STAAU</name>
<reference key="1">
    <citation type="journal article" date="1994" name="J. Bacteriol.">
        <title>Molecular cloning of two new heat shock genes related to the hsp70 genes in Staphylococcus aureus.</title>
        <authorList>
            <person name="Ohta T."/>
            <person name="Saito K."/>
            <person name="Kuroda M."/>
            <person name="Honda K."/>
            <person name="Hirata H."/>
            <person name="Hayashi H."/>
        </authorList>
    </citation>
    <scope>NUCLEOTIDE SEQUENCE [GENOMIC DNA]</scope>
    <source>
        <strain>912</strain>
    </source>
</reference>